<proteinExistence type="evidence at protein level"/>
<dbReference type="EC" id="2.5.1.-" evidence="6"/>
<dbReference type="EMBL" id="AM920437">
    <property type="protein sequence ID" value="CAP99576.1"/>
    <property type="molecule type" value="Genomic_DNA"/>
</dbReference>
<dbReference type="RefSeq" id="XP_002566182.1">
    <property type="nucleotide sequence ID" value="XM_002566136.1"/>
</dbReference>
<dbReference type="SMR" id="B6HV35"/>
<dbReference type="STRING" id="500485.B6HV35"/>
<dbReference type="GeneID" id="8309014"/>
<dbReference type="KEGG" id="pcs:N7525_004099"/>
<dbReference type="VEuPathDB" id="FungiDB:PCH_Pc22g22880"/>
<dbReference type="eggNOG" id="KOG1381">
    <property type="taxonomic scope" value="Eukaryota"/>
</dbReference>
<dbReference type="HOGENOM" id="CLU_034879_2_0_1"/>
<dbReference type="OMA" id="FGTWIRP"/>
<dbReference type="OrthoDB" id="18170at2759"/>
<dbReference type="BioCyc" id="PCHR:PC22G22880-MONOMER"/>
<dbReference type="UniPathway" id="UPA00213"/>
<dbReference type="Proteomes" id="UP000000724">
    <property type="component" value="Contig Pc00c22"/>
</dbReference>
<dbReference type="GO" id="GO:0005743">
    <property type="term" value="C:mitochondrial inner membrane"/>
    <property type="evidence" value="ECO:0007669"/>
    <property type="project" value="TreeGrafter"/>
</dbReference>
<dbReference type="GO" id="GO:0008412">
    <property type="term" value="F:4-hydroxybenzoate polyprenyltransferase activity"/>
    <property type="evidence" value="ECO:0007669"/>
    <property type="project" value="TreeGrafter"/>
</dbReference>
<dbReference type="GO" id="GO:0016114">
    <property type="term" value="P:terpenoid biosynthetic process"/>
    <property type="evidence" value="ECO:0007669"/>
    <property type="project" value="UniProtKB-UniPathway"/>
</dbReference>
<dbReference type="GO" id="GO:0006744">
    <property type="term" value="P:ubiquinone biosynthetic process"/>
    <property type="evidence" value="ECO:0007669"/>
    <property type="project" value="TreeGrafter"/>
</dbReference>
<dbReference type="CDD" id="cd13959">
    <property type="entry name" value="PT_UbiA_COQ2"/>
    <property type="match status" value="1"/>
</dbReference>
<dbReference type="FunFam" id="1.10.357.140:FF:000008">
    <property type="entry name" value="4-hydroxybenzoate octaprenyltransferase"/>
    <property type="match status" value="1"/>
</dbReference>
<dbReference type="Gene3D" id="1.10.357.140">
    <property type="entry name" value="UbiA prenyltransferase"/>
    <property type="match status" value="1"/>
</dbReference>
<dbReference type="Gene3D" id="1.20.120.1780">
    <property type="entry name" value="UbiA prenyltransferase"/>
    <property type="match status" value="1"/>
</dbReference>
<dbReference type="InterPro" id="IPR039653">
    <property type="entry name" value="Prenyltransferase"/>
</dbReference>
<dbReference type="InterPro" id="IPR000537">
    <property type="entry name" value="UbiA_prenyltransferase"/>
</dbReference>
<dbReference type="InterPro" id="IPR044878">
    <property type="entry name" value="UbiA_sf"/>
</dbReference>
<dbReference type="PANTHER" id="PTHR11048:SF39">
    <property type="entry name" value="POLYPRENYL TRANSFERASE AUSN"/>
    <property type="match status" value="1"/>
</dbReference>
<dbReference type="PANTHER" id="PTHR11048">
    <property type="entry name" value="PRENYLTRANSFERASES"/>
    <property type="match status" value="1"/>
</dbReference>
<dbReference type="Pfam" id="PF01040">
    <property type="entry name" value="UbiA"/>
    <property type="match status" value="1"/>
</dbReference>
<evidence type="ECO:0000250" key="1">
    <source>
        <dbReference type="UniProtKB" id="P32378"/>
    </source>
</evidence>
<evidence type="ECO:0000255" key="2"/>
<evidence type="ECO:0000269" key="3">
    <source ref="2"/>
</evidence>
<evidence type="ECO:0000303" key="4">
    <source ref="2"/>
</evidence>
<evidence type="ECO:0000305" key="5"/>
<evidence type="ECO:0000305" key="6">
    <source ref="2"/>
</evidence>
<accession>B6HV35</accession>
<protein>
    <recommendedName>
        <fullName evidence="4">Prenytransferase adrG</fullName>
        <ecNumber evidence="6">2.5.1.-</ecNumber>
    </recommendedName>
    <alternativeName>
        <fullName evidence="4">Andrastin A biosynthesis cluster protein G</fullName>
    </alternativeName>
</protein>
<organism>
    <name type="scientific">Penicillium rubens (strain ATCC 28089 / DSM 1075 / NRRL 1951 / Wisconsin 54-1255)</name>
    <name type="common">Penicillium chrysogenum</name>
    <dbReference type="NCBI Taxonomy" id="500485"/>
    <lineage>
        <taxon>Eukaryota</taxon>
        <taxon>Fungi</taxon>
        <taxon>Dikarya</taxon>
        <taxon>Ascomycota</taxon>
        <taxon>Pezizomycotina</taxon>
        <taxon>Eurotiomycetes</taxon>
        <taxon>Eurotiomycetidae</taxon>
        <taxon>Eurotiales</taxon>
        <taxon>Aspergillaceae</taxon>
        <taxon>Penicillium</taxon>
        <taxon>Penicillium chrysogenum species complex</taxon>
    </lineage>
</organism>
<reference key="1">
    <citation type="journal article" date="2008" name="Nat. Biotechnol.">
        <title>Genome sequencing and analysis of the filamentous fungus Penicillium chrysogenum.</title>
        <authorList>
            <person name="van den Berg M.A."/>
            <person name="Albang R."/>
            <person name="Albermann K."/>
            <person name="Badger J.H."/>
            <person name="Daran J.-M."/>
            <person name="Driessen A.J.M."/>
            <person name="Garcia-Estrada C."/>
            <person name="Fedorova N.D."/>
            <person name="Harris D.M."/>
            <person name="Heijne W.H.M."/>
            <person name="Joardar V.S."/>
            <person name="Kiel J.A.K.W."/>
            <person name="Kovalchuk A."/>
            <person name="Martin J.F."/>
            <person name="Nierman W.C."/>
            <person name="Nijland J.G."/>
            <person name="Pronk J.T."/>
            <person name="Roubos J.A."/>
            <person name="van der Klei I.J."/>
            <person name="van Peij N.N.M.E."/>
            <person name="Veenhuis M."/>
            <person name="von Doehren H."/>
            <person name="Wagner C."/>
            <person name="Wortman J.R."/>
            <person name="Bovenberg R.A.L."/>
        </authorList>
    </citation>
    <scope>NUCLEOTIDE SEQUENCE [LARGE SCALE GENOMIC DNA]</scope>
    <source>
        <strain>ATCC 28089 / DSM 1075 / NRRL 1951 / Wisconsin 54-1255</strain>
    </source>
</reference>
<reference key="2">
    <citation type="journal article" date="2013" name="Tetrahedron">
        <title>Reconstituted biosynthesis of fungal meroterpenoid andrastin A.</title>
        <authorList>
            <person name="Matsuda Y."/>
            <person name="Awakawa T."/>
            <person name="Abe I."/>
        </authorList>
    </citation>
    <scope>IDENTIFICATION</scope>
    <scope>FUNCTION</scope>
    <scope>CATALYTIC ACTIVITY</scope>
    <scope>PATHWAY</scope>
</reference>
<feature type="chain" id="PRO_0000446484" description="Prenytransferase adrG">
    <location>
        <begin position="1"/>
        <end position="325"/>
    </location>
</feature>
<feature type="transmembrane region" description="Helical" evidence="2">
    <location>
        <begin position="47"/>
        <end position="67"/>
    </location>
</feature>
<feature type="transmembrane region" description="Helical" evidence="2">
    <location>
        <begin position="71"/>
        <end position="91"/>
    </location>
</feature>
<feature type="transmembrane region" description="Helical" evidence="2">
    <location>
        <begin position="117"/>
        <end position="137"/>
    </location>
</feature>
<feature type="transmembrane region" description="Helical" evidence="2">
    <location>
        <begin position="163"/>
        <end position="183"/>
    </location>
</feature>
<feature type="transmembrane region" description="Helical" evidence="2">
    <location>
        <begin position="189"/>
        <end position="209"/>
    </location>
</feature>
<feature type="transmembrane region" description="Helical" evidence="2">
    <location>
        <begin position="236"/>
        <end position="256"/>
    </location>
</feature>
<feature type="transmembrane region" description="Helical" evidence="2">
    <location>
        <begin position="258"/>
        <end position="278"/>
    </location>
</feature>
<keyword id="KW-0460">Magnesium</keyword>
<keyword id="KW-0472">Membrane</keyword>
<keyword id="KW-1185">Reference proteome</keyword>
<keyword id="KW-0808">Transferase</keyword>
<keyword id="KW-0812">Transmembrane</keyword>
<keyword id="KW-1133">Transmembrane helix</keyword>
<name>ADRG_PENRW</name>
<sequence>MTRRNEKEEVPPQGKILDLFHPGIAPYAELMRIHRLLGFYLNTSPYLVGVAFSASISSTKIPIAVLLHRAMLLSIWSIFLRSAGCVWDDLIDMDLDSQISRTKSRPLPRGAVSPSNALLLTVALFACGGTVLIFLPWACTVDCLIVTFFALSYPFGKRFTDYPQITLMNIGWAVPMAMHSLGLDPLSQMTPTVCMFLFIGSVIIMIDVIYSRQDTEEDLKVGVKSMAVRFRDSIQLLSYSLLCASTGFLAMAGVLTGLGLPFFVLSVGGHFCGFWVLLRATQVGKSSGVESYAKYNMPKQAFRPRPETSCATWLLSTSRNEMGRA</sequence>
<comment type="function">
    <text evidence="3">Prenytransferase; part of the gene cluster that mediates the biosynthesis of andrastins, meroterpenoid compounds that exhibit inhibitory activity against ras farnesyltransferase, suggesting that they could be promising leads for antitumor agents (Ref.2). The first step of the pathway is the synthesis of 3,5-dimethylorsellinic acid (DMOA) by the polyketide synthase adrD via condensation of one acetyl-CoA starter unit with 3 malonyl-CoA units and 2 methylations (Ref.2). DMAO is then converted to farnesyl-DMAO by the prenyltransferase adrG (Ref.2). The methyltransferase adrK catalyzes the methylation of the carboxyl group of farnesyl-DMAO to farnesyl-DMAO methyl ester which is further converted to epoxyfarnesyl-DMAO methyl ester by the FAD-dependent monooxygenase adrH (Ref.2). The terpene cyclase adrI then catalyzes the carbon skeletal rearrangement to generate the andrastin E, the first compound in the pathway having the andrastin scaffold, with the tetracyclic ring system (Ref.2). The post-cyclization tailoring enzymes adrF, adrE, adrJ, and adrA, are involved in the conversion of andrastin E into andrastin A. The short chain dehydrogenase adrF is responsible for the oxidation of the C-3 a hydroxyl group of andrastin E to yield the corresponding ketone, andrastin D. The ketoreductase adrE stereoselectively reduces the carbonyl moiety to reverse the stereochemistry of the C-3 position to yield andrastin F. The acetyltransferase adrJ is the acetyltransferase that attaches the acetyl group to the C-3 hydroxyl group of andrastin F to yield andrastin C. Finally, the cytochrome P450 monooxygenase adrA catalyzes two sequential oxidation reactions of the C-23 methyl group, to generate the corresponding alcohol andrastin B, and aldehyde andrastin A (Ref.2).</text>
</comment>
<comment type="catalytic activity">
    <reaction evidence="6">
        <text>3,5-dimethylorsellinate + (2E,6E)-farnesyl diphosphate = (3R)-3-farnesyl-6-hydroxy-2,3,5-trimethyl-4-oxocyclohexa-1,5-diene-1-carboxylate + diphosphate + H(+)</text>
        <dbReference type="Rhea" id="RHEA:49632"/>
        <dbReference type="ChEBI" id="CHEBI:15378"/>
        <dbReference type="ChEBI" id="CHEBI:33019"/>
        <dbReference type="ChEBI" id="CHEBI:131856"/>
        <dbReference type="ChEBI" id="CHEBI:131857"/>
        <dbReference type="ChEBI" id="CHEBI:175763"/>
    </reaction>
    <physiologicalReaction direction="left-to-right" evidence="6">
        <dbReference type="Rhea" id="RHEA:49633"/>
    </physiologicalReaction>
</comment>
<comment type="cofactor">
    <cofactor evidence="1">
        <name>Mg(2+)</name>
        <dbReference type="ChEBI" id="CHEBI:18420"/>
    </cofactor>
</comment>
<comment type="pathway">
    <text evidence="6">Secondary metabolite biosynthesis; terpenoid biosynthesis.</text>
</comment>
<comment type="subcellular location">
    <subcellularLocation>
        <location evidence="2">Membrane</location>
        <topology evidence="2">Multi-pass membrane protein</topology>
    </subcellularLocation>
</comment>
<comment type="similarity">
    <text evidence="5">Belongs to the UbiA prenyltransferase family.</text>
</comment>
<gene>
    <name evidence="4" type="primary">adrG</name>
    <name type="ORF">Pc22g22880</name>
</gene>